<protein>
    <recommendedName>
        <fullName evidence="1">UPF0301 protein DP2218</fullName>
    </recommendedName>
</protein>
<gene>
    <name type="ordered locus">DP2218</name>
</gene>
<sequence length="190" mass="21080">MRNTIKSTNSLAGYFLVSTLQMPDSRFAGQVVYVCSHNSNGALGLVINKPDCNLSFAQVLREMGMEVSRAELPSVYIGGPVSLDAAFVLYRSHPYEGNHIDITDNISLSREKELLELVVGENSSRNYLFLVGYVGWESGQLELELRDNSWLVVPGDEQVIFDLPDGEKWKAAAAYYGIDITTFNENLGYA</sequence>
<comment type="similarity">
    <text evidence="1">Belongs to the UPF0301 (AlgH) family.</text>
</comment>
<reference key="1">
    <citation type="journal article" date="2004" name="Environ. Microbiol.">
        <title>The genome of Desulfotalea psychrophila, a sulfate-reducing bacterium from permanently cold Arctic sediments.</title>
        <authorList>
            <person name="Rabus R."/>
            <person name="Ruepp A."/>
            <person name="Frickey T."/>
            <person name="Rattei T."/>
            <person name="Fartmann B."/>
            <person name="Stark M."/>
            <person name="Bauer M."/>
            <person name="Zibat A."/>
            <person name="Lombardot T."/>
            <person name="Becker I."/>
            <person name="Amann J."/>
            <person name="Gellner K."/>
            <person name="Teeling H."/>
            <person name="Leuschner W.D."/>
            <person name="Gloeckner F.-O."/>
            <person name="Lupas A.N."/>
            <person name="Amann R."/>
            <person name="Klenk H.-P."/>
        </authorList>
    </citation>
    <scope>NUCLEOTIDE SEQUENCE [LARGE SCALE GENOMIC DNA]</scope>
    <source>
        <strain>DSM 12343 / LSv54</strain>
    </source>
</reference>
<keyword id="KW-1185">Reference proteome</keyword>
<feature type="chain" id="PRO_0000258822" description="UPF0301 protein DP2218">
    <location>
        <begin position="1"/>
        <end position="190"/>
    </location>
</feature>
<proteinExistence type="inferred from homology"/>
<dbReference type="EMBL" id="CR522870">
    <property type="protein sequence ID" value="CAG36947.1"/>
    <property type="molecule type" value="Genomic_DNA"/>
</dbReference>
<dbReference type="RefSeq" id="WP_011189459.1">
    <property type="nucleotide sequence ID" value="NC_006138.1"/>
</dbReference>
<dbReference type="SMR" id="Q6AL28"/>
<dbReference type="STRING" id="177439.DP2218"/>
<dbReference type="KEGG" id="dps:DP2218"/>
<dbReference type="eggNOG" id="COG1678">
    <property type="taxonomic scope" value="Bacteria"/>
</dbReference>
<dbReference type="HOGENOM" id="CLU_057596_1_0_7"/>
<dbReference type="OrthoDB" id="9807486at2"/>
<dbReference type="Proteomes" id="UP000000602">
    <property type="component" value="Chromosome"/>
</dbReference>
<dbReference type="GO" id="GO:0005829">
    <property type="term" value="C:cytosol"/>
    <property type="evidence" value="ECO:0007669"/>
    <property type="project" value="TreeGrafter"/>
</dbReference>
<dbReference type="Gene3D" id="3.40.1740.10">
    <property type="entry name" value="VC0467-like"/>
    <property type="match status" value="1"/>
</dbReference>
<dbReference type="HAMAP" id="MF_00758">
    <property type="entry name" value="UPF0301"/>
    <property type="match status" value="1"/>
</dbReference>
<dbReference type="InterPro" id="IPR003774">
    <property type="entry name" value="AlgH-like"/>
</dbReference>
<dbReference type="PANTHER" id="PTHR30327">
    <property type="entry name" value="UNCHARACTERIZED PROTEIN YQGE"/>
    <property type="match status" value="1"/>
</dbReference>
<dbReference type="PANTHER" id="PTHR30327:SF1">
    <property type="entry name" value="UPF0301 PROTEIN YQGE"/>
    <property type="match status" value="1"/>
</dbReference>
<dbReference type="Pfam" id="PF02622">
    <property type="entry name" value="DUF179"/>
    <property type="match status" value="1"/>
</dbReference>
<dbReference type="SUPFAM" id="SSF143456">
    <property type="entry name" value="VC0467-like"/>
    <property type="match status" value="1"/>
</dbReference>
<name>Y2218_DESPS</name>
<organism>
    <name type="scientific">Desulfotalea psychrophila (strain LSv54 / DSM 12343)</name>
    <dbReference type="NCBI Taxonomy" id="177439"/>
    <lineage>
        <taxon>Bacteria</taxon>
        <taxon>Pseudomonadati</taxon>
        <taxon>Thermodesulfobacteriota</taxon>
        <taxon>Desulfobulbia</taxon>
        <taxon>Desulfobulbales</taxon>
        <taxon>Desulfocapsaceae</taxon>
        <taxon>Desulfotalea</taxon>
    </lineage>
</organism>
<evidence type="ECO:0000255" key="1">
    <source>
        <dbReference type="HAMAP-Rule" id="MF_00758"/>
    </source>
</evidence>
<accession>Q6AL28</accession>